<sequence length="336" mass="36753">MLVLGIETSCDETSAAIVEDGRKILSNVIYSQIDIHYQFGGVVPEIASRKHVEKISYVVDMAFKQAGLTIDDIDGIAATYGPGLVGSLLVGLSFAKALSYAKRLPFVAVNHIEGHIYANFITYPQLTPPLIVLVVSGGHTNLIILKDFEEYEVVGKTRDDAAGEAFDKIARYLGLGYPGGPAIDKIAKQGDEDKYKYPVADVGGYNFSFSGLKSAVINHVHGLWQRGEEFKIEDVAASFQKTVVSILVEKTINLSLETNIRKIAVAGGVAANSKLRSEFYKKCAEHNIEFFVPEFKYCTDNAAMIASCGYFKLQKGIVSSYRENAVPYINLVSKKS</sequence>
<proteinExistence type="inferred from homology"/>
<comment type="function">
    <text evidence="1">Required for the formation of a threonylcarbamoyl group on adenosine at position 37 (t(6)A37) in tRNAs that read codons beginning with adenine. Is involved in the transfer of the threonylcarbamoyl moiety of threonylcarbamoyl-AMP (TC-AMP) to the N6 group of A37, together with TsaE and TsaB. TsaD likely plays a direct catalytic role in this reaction.</text>
</comment>
<comment type="catalytic activity">
    <reaction evidence="1">
        <text>L-threonylcarbamoyladenylate + adenosine(37) in tRNA = N(6)-L-threonylcarbamoyladenosine(37) in tRNA + AMP + H(+)</text>
        <dbReference type="Rhea" id="RHEA:37059"/>
        <dbReference type="Rhea" id="RHEA-COMP:10162"/>
        <dbReference type="Rhea" id="RHEA-COMP:10163"/>
        <dbReference type="ChEBI" id="CHEBI:15378"/>
        <dbReference type="ChEBI" id="CHEBI:73682"/>
        <dbReference type="ChEBI" id="CHEBI:74411"/>
        <dbReference type="ChEBI" id="CHEBI:74418"/>
        <dbReference type="ChEBI" id="CHEBI:456215"/>
        <dbReference type="EC" id="2.3.1.234"/>
    </reaction>
</comment>
<comment type="cofactor">
    <cofactor evidence="1">
        <name>Fe(2+)</name>
        <dbReference type="ChEBI" id="CHEBI:29033"/>
    </cofactor>
    <text evidence="1">Binds 1 Fe(2+) ion per subunit.</text>
</comment>
<comment type="subcellular location">
    <subcellularLocation>
        <location evidence="1">Cytoplasm</location>
    </subcellularLocation>
</comment>
<comment type="similarity">
    <text evidence="1">Belongs to the KAE1 / TsaD family.</text>
</comment>
<name>TSAD_CALBD</name>
<protein>
    <recommendedName>
        <fullName evidence="1">tRNA N6-adenosine threonylcarbamoyltransferase</fullName>
        <ecNumber evidence="1">2.3.1.234</ecNumber>
    </recommendedName>
    <alternativeName>
        <fullName evidence="1">N6-L-threonylcarbamoyladenine synthase</fullName>
        <shortName evidence="1">t(6)A synthase</shortName>
    </alternativeName>
    <alternativeName>
        <fullName evidence="1">t(6)A37 threonylcarbamoyladenosine biosynthesis protein TsaD</fullName>
    </alternativeName>
    <alternativeName>
        <fullName evidence="1">tRNA threonylcarbamoyladenosine biosynthesis protein TsaD</fullName>
    </alternativeName>
</protein>
<dbReference type="EC" id="2.3.1.234" evidence="1"/>
<dbReference type="EMBL" id="CP001393">
    <property type="protein sequence ID" value="ACM60926.1"/>
    <property type="molecule type" value="Genomic_DNA"/>
</dbReference>
<dbReference type="RefSeq" id="WP_015908221.1">
    <property type="nucleotide sequence ID" value="NC_012034.1"/>
</dbReference>
<dbReference type="SMR" id="B9MKR8"/>
<dbReference type="STRING" id="521460.Athe_1833"/>
<dbReference type="GeneID" id="31773190"/>
<dbReference type="KEGG" id="ate:Athe_1833"/>
<dbReference type="eggNOG" id="COG0533">
    <property type="taxonomic scope" value="Bacteria"/>
</dbReference>
<dbReference type="HOGENOM" id="CLU_023208_0_2_9"/>
<dbReference type="Proteomes" id="UP000007723">
    <property type="component" value="Chromosome"/>
</dbReference>
<dbReference type="GO" id="GO:0005737">
    <property type="term" value="C:cytoplasm"/>
    <property type="evidence" value="ECO:0007669"/>
    <property type="project" value="UniProtKB-SubCell"/>
</dbReference>
<dbReference type="GO" id="GO:0005506">
    <property type="term" value="F:iron ion binding"/>
    <property type="evidence" value="ECO:0007669"/>
    <property type="project" value="UniProtKB-UniRule"/>
</dbReference>
<dbReference type="GO" id="GO:0061711">
    <property type="term" value="F:N(6)-L-threonylcarbamoyladenine synthase activity"/>
    <property type="evidence" value="ECO:0007669"/>
    <property type="project" value="UniProtKB-EC"/>
</dbReference>
<dbReference type="GO" id="GO:0002949">
    <property type="term" value="P:tRNA threonylcarbamoyladenosine modification"/>
    <property type="evidence" value="ECO:0007669"/>
    <property type="project" value="UniProtKB-UniRule"/>
</dbReference>
<dbReference type="CDD" id="cd24133">
    <property type="entry name" value="ASKHA_NBD_TsaD_bac"/>
    <property type="match status" value="1"/>
</dbReference>
<dbReference type="FunFam" id="3.30.420.40:FF:000012">
    <property type="entry name" value="tRNA N6-adenosine threonylcarbamoyltransferase"/>
    <property type="match status" value="1"/>
</dbReference>
<dbReference type="FunFam" id="3.30.420.40:FF:000040">
    <property type="entry name" value="tRNA N6-adenosine threonylcarbamoyltransferase"/>
    <property type="match status" value="1"/>
</dbReference>
<dbReference type="Gene3D" id="3.30.420.40">
    <property type="match status" value="2"/>
</dbReference>
<dbReference type="HAMAP" id="MF_01445">
    <property type="entry name" value="TsaD"/>
    <property type="match status" value="1"/>
</dbReference>
<dbReference type="InterPro" id="IPR043129">
    <property type="entry name" value="ATPase_NBD"/>
</dbReference>
<dbReference type="InterPro" id="IPR000905">
    <property type="entry name" value="Gcp-like_dom"/>
</dbReference>
<dbReference type="InterPro" id="IPR017861">
    <property type="entry name" value="KAE1/TsaD"/>
</dbReference>
<dbReference type="InterPro" id="IPR022450">
    <property type="entry name" value="TsaD"/>
</dbReference>
<dbReference type="NCBIfam" id="TIGR00329">
    <property type="entry name" value="gcp_kae1"/>
    <property type="match status" value="1"/>
</dbReference>
<dbReference type="NCBIfam" id="TIGR03723">
    <property type="entry name" value="T6A_TsaD_YgjD"/>
    <property type="match status" value="1"/>
</dbReference>
<dbReference type="PANTHER" id="PTHR11735">
    <property type="entry name" value="TRNA N6-ADENOSINE THREONYLCARBAMOYLTRANSFERASE"/>
    <property type="match status" value="1"/>
</dbReference>
<dbReference type="PANTHER" id="PTHR11735:SF6">
    <property type="entry name" value="TRNA N6-ADENOSINE THREONYLCARBAMOYLTRANSFERASE, MITOCHONDRIAL"/>
    <property type="match status" value="1"/>
</dbReference>
<dbReference type="Pfam" id="PF00814">
    <property type="entry name" value="TsaD"/>
    <property type="match status" value="1"/>
</dbReference>
<dbReference type="PRINTS" id="PR00789">
    <property type="entry name" value="OSIALOPTASE"/>
</dbReference>
<dbReference type="SUPFAM" id="SSF53067">
    <property type="entry name" value="Actin-like ATPase domain"/>
    <property type="match status" value="2"/>
</dbReference>
<reference key="1">
    <citation type="submission" date="2009-01" db="EMBL/GenBank/DDBJ databases">
        <title>Complete sequence of chromosome of Caldicellulosiruptor becscii DSM 6725.</title>
        <authorList>
            <person name="Lucas S."/>
            <person name="Copeland A."/>
            <person name="Lapidus A."/>
            <person name="Glavina del Rio T."/>
            <person name="Tice H."/>
            <person name="Bruce D."/>
            <person name="Goodwin L."/>
            <person name="Pitluck S."/>
            <person name="Sims D."/>
            <person name="Meincke L."/>
            <person name="Brettin T."/>
            <person name="Detter J.C."/>
            <person name="Han C."/>
            <person name="Larimer F."/>
            <person name="Land M."/>
            <person name="Hauser L."/>
            <person name="Kyrpides N."/>
            <person name="Ovchinnikova G."/>
            <person name="Kataeva I."/>
            <person name="Adams M.W.W."/>
        </authorList>
    </citation>
    <scope>NUCLEOTIDE SEQUENCE [LARGE SCALE GENOMIC DNA]</scope>
    <source>
        <strain>ATCC BAA-1888 / DSM 6725 / KCTC 15123 / Z-1320</strain>
    </source>
</reference>
<keyword id="KW-0012">Acyltransferase</keyword>
<keyword id="KW-0963">Cytoplasm</keyword>
<keyword id="KW-0408">Iron</keyword>
<keyword id="KW-0479">Metal-binding</keyword>
<keyword id="KW-0808">Transferase</keyword>
<keyword id="KW-0819">tRNA processing</keyword>
<feature type="chain" id="PRO_1000184951" description="tRNA N6-adenosine threonylcarbamoyltransferase">
    <location>
        <begin position="1"/>
        <end position="336"/>
    </location>
</feature>
<feature type="binding site" evidence="1">
    <location>
        <position position="111"/>
    </location>
    <ligand>
        <name>Fe cation</name>
        <dbReference type="ChEBI" id="CHEBI:24875"/>
    </ligand>
</feature>
<feature type="binding site" evidence="1">
    <location>
        <position position="115"/>
    </location>
    <ligand>
        <name>Fe cation</name>
        <dbReference type="ChEBI" id="CHEBI:24875"/>
    </ligand>
</feature>
<feature type="binding site" evidence="1">
    <location>
        <begin position="134"/>
        <end position="138"/>
    </location>
    <ligand>
        <name>substrate</name>
    </ligand>
</feature>
<feature type="binding site" evidence="1">
    <location>
        <position position="167"/>
    </location>
    <ligand>
        <name>substrate</name>
    </ligand>
</feature>
<feature type="binding site" evidence="1">
    <location>
        <position position="180"/>
    </location>
    <ligand>
        <name>substrate</name>
    </ligand>
</feature>
<feature type="binding site" evidence="1">
    <location>
        <position position="184"/>
    </location>
    <ligand>
        <name>substrate</name>
    </ligand>
</feature>
<feature type="binding site" evidence="1">
    <location>
        <position position="272"/>
    </location>
    <ligand>
        <name>substrate</name>
    </ligand>
</feature>
<feature type="binding site" evidence="1">
    <location>
        <position position="300"/>
    </location>
    <ligand>
        <name>Fe cation</name>
        <dbReference type="ChEBI" id="CHEBI:24875"/>
    </ligand>
</feature>
<evidence type="ECO:0000255" key="1">
    <source>
        <dbReference type="HAMAP-Rule" id="MF_01445"/>
    </source>
</evidence>
<accession>B9MKR8</accession>
<gene>
    <name evidence="1" type="primary">tsaD</name>
    <name type="synonym">gcp</name>
    <name type="ordered locus">Athe_1833</name>
</gene>
<organism>
    <name type="scientific">Caldicellulosiruptor bescii (strain ATCC BAA-1888 / DSM 6725 / KCTC 15123 / Z-1320)</name>
    <name type="common">Anaerocellum thermophilum</name>
    <dbReference type="NCBI Taxonomy" id="521460"/>
    <lineage>
        <taxon>Bacteria</taxon>
        <taxon>Bacillati</taxon>
        <taxon>Bacillota</taxon>
        <taxon>Bacillota incertae sedis</taxon>
        <taxon>Caldicellulosiruptorales</taxon>
        <taxon>Caldicellulosiruptoraceae</taxon>
        <taxon>Caldicellulosiruptor</taxon>
    </lineage>
</organism>